<evidence type="ECO:0000255" key="1"/>
<evidence type="ECO:0000255" key="2">
    <source>
        <dbReference type="PROSITE-ProRule" id="PRU01005"/>
    </source>
</evidence>
<evidence type="ECO:0000269" key="3">
    <source>
    </source>
</evidence>
<evidence type="ECO:0000269" key="4">
    <source>
    </source>
</evidence>
<evidence type="ECO:0000303" key="5">
    <source>
    </source>
</evidence>
<evidence type="ECO:0000305" key="6">
    <source>
    </source>
</evidence>
<comment type="function">
    <text evidence="4">Neurotoxin (PubMed:33060291). In vivo, induces contraction paralysis followed by death (within 2 hours) on zebrafish larvae (PubMed:33060291). Also induces body contraction in Nematostella 11-dpf polyps (PubMed:33060291).</text>
</comment>
<comment type="subcellular location">
    <subcellularLocation>
        <location evidence="4">Nematocyst</location>
    </subcellularLocation>
    <subcellularLocation>
        <location evidence="4">Secreted</location>
    </subcellularLocation>
</comment>
<comment type="tissue specificity">
    <text evidence="4">Expressed in nematocytes (in planulae and primary polyps). Is localized predominantly in the body column nematocytes and not in the tentacles (in primary polyps).</text>
</comment>
<comment type="developmental stage">
    <text evidence="3 4">Is highly detected in planulae and primary polyps (9d), and more weakly in both adult females and males (at protein level) (PubMed:33060291). Transcripts are abundant in larvae and significantly decrease later in the life cycle (PubMed:29739837).</text>
</comment>
<comment type="online information" name="National Center for Biotechnology Information (NCBI)">
    <link uri="https://www.ncbi.nlm.nih.gov/nuccore/HADP01047794.1/"/>
</comment>
<proteinExistence type="evidence at protein level"/>
<protein>
    <recommendedName>
        <fullName evidence="5">Neurotoxin ShK-like1</fullName>
    </recommendedName>
</protein>
<name>SHKL1_NEMVE</name>
<reference key="1">
    <citation type="journal article" date="2020" name="Proc. Natl. Acad. Sci. U.S.A.">
        <title>Toxin-like neuropeptides in the sea anemone Nematostella unravel recruitment from the nervous system to venom.</title>
        <authorList>
            <person name="Sachkova M.Y."/>
            <person name="Landau M."/>
            <person name="Surm J.M."/>
            <person name="Macrander J."/>
            <person name="Singer S.A."/>
            <person name="Reitzel A.M."/>
            <person name="Moran Y."/>
        </authorList>
    </citation>
    <scope>NUCLEOTIDE SEQUENCE [MRNA]</scope>
    <scope>PROTEIN SEQUENCE OF 39-50 AND 63-73</scope>
    <scope>FUNCTION</scope>
    <scope>BIOASSAY</scope>
    <scope>IDENTIFICATION BY MASS SPECTROMETRY</scope>
    <scope>SUBCELLULAR LOCATION</scope>
    <scope>TISSUE SPECIFICITY</scope>
    <scope>DEVELOPMENTAL STAGE</scope>
    <scope>RECOMBINANT EXPRESSION</scope>
</reference>
<reference key="2">
    <citation type="journal article" date="2018" name="Development">
        <title>NvERTx: a gene expression database to compare embryogenesis and regeneration in the sea anemone Nematostella vectensis.</title>
        <authorList>
            <person name="Warner J.F."/>
            <person name="Guerlais V."/>
            <person name="Amiel A.R."/>
            <person name="Johnston H."/>
            <person name="Nedoncelle K."/>
            <person name="Roettinger E."/>
        </authorList>
    </citation>
    <scope>DEVELOPMENTAL STAGE</scope>
</reference>
<keyword id="KW-0165">Cleavage on pair of basic residues</keyword>
<keyword id="KW-0903">Direct protein sequencing</keyword>
<keyword id="KW-1015">Disulfide bond</keyword>
<keyword id="KW-0166">Nematocyst</keyword>
<keyword id="KW-0528">Neurotoxin</keyword>
<keyword id="KW-0964">Secreted</keyword>
<keyword id="KW-0732">Signal</keyword>
<keyword id="KW-0800">Toxin</keyword>
<sequence>MSRKLLAVLMVCTFFLIAASMGTNALPFHEGIERRAAKCVDKMPFVCMRKDIPAICKNRNHRSYAFIMDVCRKTCGQCT</sequence>
<organism>
    <name type="scientific">Nematostella vectensis</name>
    <name type="common">Starlet sea anemone</name>
    <dbReference type="NCBI Taxonomy" id="45351"/>
    <lineage>
        <taxon>Eukaryota</taxon>
        <taxon>Metazoa</taxon>
        <taxon>Cnidaria</taxon>
        <taxon>Anthozoa</taxon>
        <taxon>Hexacorallia</taxon>
        <taxon>Actiniaria</taxon>
        <taxon>Edwardsiidae</taxon>
        <taxon>Nematostella</taxon>
    </lineage>
</organism>
<dbReference type="SMR" id="P0DQR6"/>
<dbReference type="GO" id="GO:0005576">
    <property type="term" value="C:extracellular region"/>
    <property type="evidence" value="ECO:0007669"/>
    <property type="project" value="UniProtKB-SubCell"/>
</dbReference>
<dbReference type="GO" id="GO:0042151">
    <property type="term" value="C:nematocyst"/>
    <property type="evidence" value="ECO:0007669"/>
    <property type="project" value="UniProtKB-SubCell"/>
</dbReference>
<dbReference type="GO" id="GO:0090729">
    <property type="term" value="F:toxin activity"/>
    <property type="evidence" value="ECO:0007669"/>
    <property type="project" value="UniProtKB-KW"/>
</dbReference>
<accession>P0DQR6</accession>
<feature type="signal peptide" evidence="1">
    <location>
        <begin position="1"/>
        <end position="25"/>
    </location>
</feature>
<feature type="propeptide" id="PRO_0000453910" evidence="6">
    <location>
        <begin position="26"/>
        <end position="35"/>
    </location>
</feature>
<feature type="chain" id="PRO_0000453911" description="Neurotoxin ShK-like1" evidence="6">
    <location>
        <begin position="36"/>
        <end position="79"/>
    </location>
</feature>
<feature type="domain" description="ShKT" evidence="2">
    <location>
        <begin position="39"/>
        <end position="78"/>
    </location>
</feature>
<feature type="disulfide bond" evidence="2">
    <location>
        <begin position="39"/>
        <end position="78"/>
    </location>
</feature>
<feature type="disulfide bond" evidence="2">
    <location>
        <begin position="47"/>
        <end position="71"/>
    </location>
</feature>
<feature type="disulfide bond" evidence="2">
    <location>
        <begin position="56"/>
        <end position="75"/>
    </location>
</feature>